<gene>
    <name evidence="2" type="primary">cteC</name>
    <name evidence="5" type="ordered locus">CV_1467</name>
</gene>
<name>CTEC_CHRVO</name>
<proteinExistence type="evidence at protein level"/>
<evidence type="ECO:0000269" key="1">
    <source>
    </source>
</evidence>
<evidence type="ECO:0000303" key="2">
    <source>
    </source>
</evidence>
<evidence type="ECO:0000305" key="3"/>
<evidence type="ECO:0000305" key="4">
    <source>
    </source>
</evidence>
<evidence type="ECO:0000312" key="5">
    <source>
        <dbReference type="EMBL" id="AAQ59142.1"/>
    </source>
</evidence>
<evidence type="ECO:0007829" key="6">
    <source>
        <dbReference type="PDB" id="8HTD"/>
    </source>
</evidence>
<evidence type="ECO:0007829" key="7">
    <source>
        <dbReference type="PDB" id="8UX2"/>
    </source>
</evidence>
<comment type="function">
    <text evidence="1">ADP-ribosyltransferase that specifically modifies host ubiquitin on 'Thr-66' residue, which causes the shutdown of polyubiquitin synthesis and disrupts the recognition and reversal of polyubiquitin in host cells during infection (PubMed:32330457). Threonine ADP-ribosylation of ubiquitin prevents the transfer of ubiquitin from ubiquitin-activating enzyme E1 to ubiquitin-conjugating enzyme E2, which inhibits subsequent ubiquitin activation and leads to the shutdown of polyubiquitin synthesis in host cells (PubMed:32330457). The modification also causes dysfunction of polyubiquitin chains in cells, thereby blocking host ubiquitin signaling (PubMed:32330457). ADP-ribosylation by CteC is likely irreversible (PubMed:32330457). Plays a crucial role in bacterial colonization in mice during infection (PubMed:32330457).</text>
</comment>
<comment type="catalytic activity">
    <reaction evidence="1">
        <text>L-threonyl-[protein] + NAD(+) = O-(ADP-D-ribosyl)-L-threonyl-[protein] + nicotinamide + H(+)</text>
        <dbReference type="Rhea" id="RHEA:72463"/>
        <dbReference type="Rhea" id="RHEA-COMP:11060"/>
        <dbReference type="Rhea" id="RHEA-COMP:18113"/>
        <dbReference type="ChEBI" id="CHEBI:15378"/>
        <dbReference type="ChEBI" id="CHEBI:17154"/>
        <dbReference type="ChEBI" id="CHEBI:30013"/>
        <dbReference type="ChEBI" id="CHEBI:57540"/>
        <dbReference type="ChEBI" id="CHEBI:192363"/>
    </reaction>
    <physiologicalReaction direction="left-to-right" evidence="1">
        <dbReference type="Rhea" id="RHEA:72464"/>
    </physiologicalReaction>
</comment>
<comment type="subunit">
    <text evidence="1">Interacts directly with host ubiquitin.</text>
</comment>
<comment type="subcellular location">
    <subcellularLocation>
        <location evidence="4">Secreted</location>
    </subcellularLocation>
    <subcellularLocation>
        <location evidence="4">Host cell</location>
    </subcellularLocation>
    <text evidence="4">Secreted via the type III secretion system (T3SS).</text>
</comment>
<comment type="disruption phenotype">
    <text evidence="1">Deletion of the gene abolishes the modifications and effects on mono-ubiquitin and polyubiquitin chains (PubMed:32330457). It reduces bacterial survival in mouse livers 5-fold at 3 days postinfection and dramatically reduces bacterial survival 100-fold at 6 days postinfection (PubMed:32330457).</text>
</comment>
<reference key="1">
    <citation type="journal article" date="2003" name="Proc. Natl. Acad. Sci. U.S.A.">
        <title>The complete genome sequence of Chromobacterium violaceum reveals remarkable and exploitable bacterial adaptability.</title>
        <authorList>
            <person name="Vasconcelos A.T.R."/>
            <person name="de Almeida D.F."/>
            <person name="Hungria M."/>
            <person name="Guimaraes C.T."/>
            <person name="Antonio R.V."/>
            <person name="Almeida F.C."/>
            <person name="de Almeida L.G.P."/>
            <person name="de Almeida R."/>
            <person name="Alves-Gomes J.A."/>
            <person name="Andrade E.M."/>
            <person name="Araripe J."/>
            <person name="de Araujo M.F.F."/>
            <person name="Astolfi-Filho S."/>
            <person name="Azevedo V."/>
            <person name="Baptista A.J."/>
            <person name="Bataus L.A.M."/>
            <person name="Batista J.S."/>
            <person name="Belo A."/>
            <person name="van den Berg C."/>
            <person name="Bogo M."/>
            <person name="Bonatto S."/>
            <person name="Bordignon J."/>
            <person name="Brigido M.M."/>
            <person name="Brito C.A."/>
            <person name="Brocchi M."/>
            <person name="Burity H.A."/>
            <person name="Camargo A.A."/>
            <person name="Cardoso D.D.P."/>
            <person name="Carneiro N.P."/>
            <person name="Carraro D.M."/>
            <person name="Carvalho C.M.B."/>
            <person name="Cascardo J.C.M."/>
            <person name="Cavada B.S."/>
            <person name="Chueire L.M.O."/>
            <person name="Creczynski-Pasa T.B."/>
            <person name="Cunha-Junior N.C."/>
            <person name="Fagundes N."/>
            <person name="Falcao C.L."/>
            <person name="Fantinatti F."/>
            <person name="Farias I.P."/>
            <person name="Felipe M.S.S."/>
            <person name="Ferrari L.P."/>
            <person name="Ferro J.A."/>
            <person name="Ferro M.I.T."/>
            <person name="Franco G.R."/>
            <person name="Freitas N.S.A."/>
            <person name="Furlan L.R."/>
            <person name="Gazzinelli R.T."/>
            <person name="Gomes E.A."/>
            <person name="Goncalves P.R."/>
            <person name="Grangeiro T.B."/>
            <person name="Grattapaglia D."/>
            <person name="Grisard E.C."/>
            <person name="Hanna E.S."/>
            <person name="Jardim S.N."/>
            <person name="Laurino J."/>
            <person name="Leoi L.C.T."/>
            <person name="Lima L.F.A."/>
            <person name="Loureiro M.F."/>
            <person name="Lyra M.C.C.P."/>
            <person name="Madeira H.M.F."/>
            <person name="Manfio G.P."/>
            <person name="Maranhao A.Q."/>
            <person name="Martins W.S."/>
            <person name="di Mauro S.M.Z."/>
            <person name="de Medeiros S.R.B."/>
            <person name="Meissner R.V."/>
            <person name="Moreira M.A.M."/>
            <person name="Nascimento F.F."/>
            <person name="Nicolas M.F."/>
            <person name="Oliveira J.G."/>
            <person name="Oliveira S.C."/>
            <person name="Paixao R.F.C."/>
            <person name="Parente J.A."/>
            <person name="Pedrosa F.O."/>
            <person name="Pena S.D.J."/>
            <person name="Pereira J.O."/>
            <person name="Pereira M."/>
            <person name="Pinto L.S.R.C."/>
            <person name="Pinto L.S."/>
            <person name="Porto J.I.R."/>
            <person name="Potrich D.P."/>
            <person name="Ramalho-Neto C.E."/>
            <person name="Reis A.M.M."/>
            <person name="Rigo L.U."/>
            <person name="Rondinelli E."/>
            <person name="Santos E.B.P."/>
            <person name="Santos F.R."/>
            <person name="Schneider M.P.C."/>
            <person name="Seuanez H.N."/>
            <person name="Silva A.M.R."/>
            <person name="da Silva A.L.C."/>
            <person name="Silva D.W."/>
            <person name="Silva R."/>
            <person name="Simoes I.C."/>
            <person name="Simon D."/>
            <person name="Soares C.M.A."/>
            <person name="Soares R.B.A."/>
            <person name="Souza E.M."/>
            <person name="Souza K.R.L."/>
            <person name="Souza R.C."/>
            <person name="Steffens M.B.R."/>
            <person name="Steindel M."/>
            <person name="Teixeira S.R."/>
            <person name="Urmenyi T."/>
            <person name="Vettore A."/>
            <person name="Wassem R."/>
            <person name="Zaha A."/>
            <person name="Simpson A.J.G."/>
        </authorList>
    </citation>
    <scope>NUCLEOTIDE SEQUENCE [LARGE SCALE GENOMIC DNA]</scope>
    <source>
        <strain>ATCC 12472 / DSM 30191 / JCM 1249 / CCUG 213 / NBRC 12614 / NCIMB 9131 / NCTC 9757 / MK</strain>
    </source>
</reference>
<reference key="2">
    <citation type="journal article" date="2020" name="Mol. Cell">
        <title>Threonine ADP-ribosylation of ubiquitin by a bacterial effector family blocks host ubiquitination.</title>
        <authorList>
            <person name="Yan F."/>
            <person name="Huang C."/>
            <person name="Wang X."/>
            <person name="Tan J."/>
            <person name="Cheng S."/>
            <person name="Wan M."/>
            <person name="Wang Z."/>
            <person name="Wang S."/>
            <person name="Luo S."/>
            <person name="Li A."/>
            <person name="Guo X."/>
            <person name="Feng M."/>
            <person name="Liu X."/>
            <person name="Zhu Y."/>
            <person name="Zhou Y."/>
        </authorList>
    </citation>
    <scope>FUNCTION</scope>
    <scope>CATALYTIC ACTIVITY</scope>
    <scope>INTERACTION WITH HOST UBIQUITIN</scope>
    <scope>SUBCELLULAR LOCATION</scope>
    <scope>DISRUPTION PHENOTYPE</scope>
    <scope>MUTAGENESIS OF ARG-65 AND GLU-220</scope>
    <source>
        <strain>ATCC 12472 / DSM 30191 / JCM 1249 / CCUG 213 / NBRC 12614 / NCIMB 9131 / NCTC 9757 / MK</strain>
    </source>
</reference>
<protein>
    <recommendedName>
        <fullName evidence="3">NAD(+)--protein-threonine ADP-ribosyltransferase</fullName>
        <ecNumber evidence="1">2.4.2.-</ecNumber>
    </recommendedName>
    <alternativeName>
        <fullName evidence="2">Adenosine diphosphate-ribosyltransferase</fullName>
        <shortName evidence="2">ADP-ribosyltransferase</shortName>
    </alternativeName>
    <alternativeName>
        <fullName evidence="2">Type III effector CteC</fullName>
    </alternativeName>
</protein>
<accession>Q7NY09</accession>
<dbReference type="EC" id="2.4.2.-" evidence="1"/>
<dbReference type="EMBL" id="AE016825">
    <property type="protein sequence ID" value="AAQ59142.1"/>
    <property type="molecule type" value="Genomic_DNA"/>
</dbReference>
<dbReference type="RefSeq" id="WP_011135019.1">
    <property type="nucleotide sequence ID" value="NC_005085.1"/>
</dbReference>
<dbReference type="PDB" id="8HTC">
    <property type="method" value="X-ray"/>
    <property type="resolution" value="2.20 A"/>
    <property type="chains" value="A=45-276"/>
</dbReference>
<dbReference type="PDB" id="8HTD">
    <property type="method" value="X-ray"/>
    <property type="resolution" value="1.85 A"/>
    <property type="chains" value="A=45-276"/>
</dbReference>
<dbReference type="PDB" id="8HTE">
    <property type="method" value="X-ray"/>
    <property type="resolution" value="2.31 A"/>
    <property type="chains" value="A=45-276"/>
</dbReference>
<dbReference type="PDB" id="8HTF">
    <property type="method" value="X-ray"/>
    <property type="resolution" value="2.15 A"/>
    <property type="chains" value="A=45-276"/>
</dbReference>
<dbReference type="PDB" id="8UX2">
    <property type="method" value="X-ray"/>
    <property type="resolution" value="1.87 A"/>
    <property type="chains" value="A/B/C=36-276"/>
</dbReference>
<dbReference type="PDBsum" id="8HTC"/>
<dbReference type="PDBsum" id="8HTD"/>
<dbReference type="PDBsum" id="8HTE"/>
<dbReference type="PDBsum" id="8HTF"/>
<dbReference type="PDBsum" id="8UX2"/>
<dbReference type="SMR" id="Q7NY09"/>
<dbReference type="KEGG" id="cvi:CV_1467"/>
<dbReference type="HOGENOM" id="CLU_1007204_0_0_4"/>
<dbReference type="Proteomes" id="UP000001424">
    <property type="component" value="Chromosome"/>
</dbReference>
<dbReference type="GO" id="GO:0005576">
    <property type="term" value="C:extracellular region"/>
    <property type="evidence" value="ECO:0007669"/>
    <property type="project" value="UniProtKB-SubCell"/>
</dbReference>
<dbReference type="GO" id="GO:0043657">
    <property type="term" value="C:host cell"/>
    <property type="evidence" value="ECO:0007669"/>
    <property type="project" value="UniProtKB-SubCell"/>
</dbReference>
<dbReference type="GO" id="GO:0016757">
    <property type="term" value="F:glycosyltransferase activity"/>
    <property type="evidence" value="ECO:0007669"/>
    <property type="project" value="UniProtKB-KW"/>
</dbReference>
<sequence>MLFFTGLQMIWIDKAMNISLSSAVAAASVSTASVGGVPHEITGGNRQEKLAQLMRQFESGGLYLRTVSDHRDEFENTFMPKLDACLGHGCDERYWSSATFIQQGLNGKVHDPHADRTGLIISADARLGGFSTFDAATANVPSGLEPSQYFPGQFPKFDMMGAYQATWNEDIFSVDATAVSEQQMDELGIPDEYRSVFDFDRIQEKMAQPRLAGREVEPTEAKICYQPKDVLGIYVDVDSPASQSKARELQQAMREQGFDLPFIAYRGGAAQELASV</sequence>
<organism>
    <name type="scientific">Chromobacterium violaceum (strain ATCC 12472 / DSM 30191 / JCM 1249 / CCUG 213 / NBRC 12614 / NCIMB 9131 / NCTC 9757 / MK)</name>
    <dbReference type="NCBI Taxonomy" id="243365"/>
    <lineage>
        <taxon>Bacteria</taxon>
        <taxon>Pseudomonadati</taxon>
        <taxon>Pseudomonadota</taxon>
        <taxon>Betaproteobacteria</taxon>
        <taxon>Neisseriales</taxon>
        <taxon>Chromobacteriaceae</taxon>
        <taxon>Chromobacterium</taxon>
    </lineage>
</organism>
<keyword id="KW-0002">3D-structure</keyword>
<keyword id="KW-0328">Glycosyltransferase</keyword>
<keyword id="KW-1185">Reference proteome</keyword>
<keyword id="KW-0964">Secreted</keyword>
<keyword id="KW-0808">Transferase</keyword>
<keyword id="KW-0843">Virulence</keyword>
<feature type="chain" id="PRO_0000456476" description="NAD(+)--protein-threonine ADP-ribosyltransferase">
    <location>
        <begin position="1"/>
        <end position="276"/>
    </location>
</feature>
<feature type="mutagenesis site" description="Abolishes the ability to modify ubiquitin in HEK293T cells." evidence="1">
    <original>R</original>
    <variation>A</variation>
    <location>
        <position position="65"/>
    </location>
</feature>
<feature type="mutagenesis site" description="Abolishes the ability to modify ubiquitin in HEK293T cells." evidence="1">
    <original>E</original>
    <variation>A</variation>
    <location>
        <position position="220"/>
    </location>
</feature>
<feature type="helix" evidence="7">
    <location>
        <begin position="39"/>
        <end position="42"/>
    </location>
</feature>
<feature type="helix" evidence="6">
    <location>
        <begin position="46"/>
        <end position="57"/>
    </location>
</feature>
<feature type="turn" evidence="6">
    <location>
        <begin position="58"/>
        <end position="60"/>
    </location>
</feature>
<feature type="strand" evidence="6">
    <location>
        <begin position="62"/>
        <end position="68"/>
    </location>
</feature>
<feature type="helix" evidence="6">
    <location>
        <begin position="70"/>
        <end position="76"/>
    </location>
</feature>
<feature type="helix" evidence="6">
    <location>
        <begin position="78"/>
        <end position="86"/>
    </location>
</feature>
<feature type="strand" evidence="6">
    <location>
        <begin position="96"/>
        <end position="101"/>
    </location>
</feature>
<feature type="strand" evidence="6">
    <location>
        <begin position="117"/>
        <end position="121"/>
    </location>
</feature>
<feature type="strand" evidence="6">
    <location>
        <begin position="125"/>
        <end position="131"/>
    </location>
</feature>
<feature type="turn" evidence="7">
    <location>
        <begin position="147"/>
        <end position="153"/>
    </location>
</feature>
<feature type="helix" evidence="6">
    <location>
        <begin position="159"/>
        <end position="166"/>
    </location>
</feature>
<feature type="helix" evidence="6">
    <location>
        <begin position="169"/>
        <end position="173"/>
    </location>
</feature>
<feature type="helix" evidence="6">
    <location>
        <begin position="181"/>
        <end position="187"/>
    </location>
</feature>
<feature type="helix" evidence="6">
    <location>
        <begin position="191"/>
        <end position="193"/>
    </location>
</feature>
<feature type="helix" evidence="6">
    <location>
        <begin position="199"/>
        <end position="212"/>
    </location>
</feature>
<feature type="strand" evidence="6">
    <location>
        <begin position="220"/>
        <end position="224"/>
    </location>
</feature>
<feature type="helix" evidence="6">
    <location>
        <begin position="227"/>
        <end position="229"/>
    </location>
</feature>
<feature type="strand" evidence="6">
    <location>
        <begin position="230"/>
        <end position="234"/>
    </location>
</feature>
<feature type="helix" evidence="6">
    <location>
        <begin position="240"/>
        <end position="255"/>
    </location>
</feature>
<feature type="strand" evidence="6">
    <location>
        <begin position="262"/>
        <end position="266"/>
    </location>
</feature>
<feature type="strand" evidence="6">
    <location>
        <begin position="269"/>
        <end position="274"/>
    </location>
</feature>